<accession>Q74L87</accession>
<gene>
    <name evidence="1" type="primary">rplW</name>
    <name type="ordered locus">LJ_0341</name>
</gene>
<comment type="function">
    <text evidence="1">One of the early assembly proteins it binds 23S rRNA. One of the proteins that surrounds the polypeptide exit tunnel on the outside of the ribosome. Forms the main docking site for trigger factor binding to the ribosome.</text>
</comment>
<comment type="subunit">
    <text evidence="1">Part of the 50S ribosomal subunit. Contacts protein L29, and trigger factor when it is bound to the ribosome.</text>
</comment>
<comment type="similarity">
    <text evidence="1">Belongs to the universal ribosomal protein uL23 family.</text>
</comment>
<organism>
    <name type="scientific">Lactobacillus johnsonii (strain CNCM I-12250 / La1 / NCC 533)</name>
    <dbReference type="NCBI Taxonomy" id="257314"/>
    <lineage>
        <taxon>Bacteria</taxon>
        <taxon>Bacillati</taxon>
        <taxon>Bacillota</taxon>
        <taxon>Bacilli</taxon>
        <taxon>Lactobacillales</taxon>
        <taxon>Lactobacillaceae</taxon>
        <taxon>Lactobacillus</taxon>
    </lineage>
</organism>
<evidence type="ECO:0000255" key="1">
    <source>
        <dbReference type="HAMAP-Rule" id="MF_01369"/>
    </source>
</evidence>
<evidence type="ECO:0000305" key="2"/>
<reference key="1">
    <citation type="journal article" date="2004" name="Proc. Natl. Acad. Sci. U.S.A.">
        <title>The genome sequence of the probiotic intestinal bacterium Lactobacillus johnsonii NCC 533.</title>
        <authorList>
            <person name="Pridmore R.D."/>
            <person name="Berger B."/>
            <person name="Desiere F."/>
            <person name="Vilanova D."/>
            <person name="Barretto C."/>
            <person name="Pittet A.-C."/>
            <person name="Zwahlen M.-C."/>
            <person name="Rouvet M."/>
            <person name="Altermann E."/>
            <person name="Barrangou R."/>
            <person name="Mollet B."/>
            <person name="Mercenier A."/>
            <person name="Klaenhammer T."/>
            <person name="Arigoni F."/>
            <person name="Schell M.A."/>
        </authorList>
    </citation>
    <scope>NUCLEOTIDE SEQUENCE [LARGE SCALE GENOMIC DNA]</scope>
    <source>
        <strain>CNCM I-1225 / La1 / NCC 533</strain>
    </source>
</reference>
<dbReference type="EMBL" id="AE017198">
    <property type="protein sequence ID" value="AAS08327.1"/>
    <property type="molecule type" value="Genomic_DNA"/>
</dbReference>
<dbReference type="RefSeq" id="WP_004895873.1">
    <property type="nucleotide sequence ID" value="NC_005362.1"/>
</dbReference>
<dbReference type="SMR" id="Q74L87"/>
<dbReference type="GeneID" id="83569756"/>
<dbReference type="KEGG" id="ljo:LJ_0341"/>
<dbReference type="eggNOG" id="COG0089">
    <property type="taxonomic scope" value="Bacteria"/>
</dbReference>
<dbReference type="HOGENOM" id="CLU_037562_3_2_9"/>
<dbReference type="Proteomes" id="UP000000581">
    <property type="component" value="Chromosome"/>
</dbReference>
<dbReference type="GO" id="GO:1990904">
    <property type="term" value="C:ribonucleoprotein complex"/>
    <property type="evidence" value="ECO:0007669"/>
    <property type="project" value="UniProtKB-KW"/>
</dbReference>
<dbReference type="GO" id="GO:0005840">
    <property type="term" value="C:ribosome"/>
    <property type="evidence" value="ECO:0007669"/>
    <property type="project" value="UniProtKB-KW"/>
</dbReference>
<dbReference type="GO" id="GO:0019843">
    <property type="term" value="F:rRNA binding"/>
    <property type="evidence" value="ECO:0007669"/>
    <property type="project" value="UniProtKB-UniRule"/>
</dbReference>
<dbReference type="GO" id="GO:0003735">
    <property type="term" value="F:structural constituent of ribosome"/>
    <property type="evidence" value="ECO:0007669"/>
    <property type="project" value="InterPro"/>
</dbReference>
<dbReference type="GO" id="GO:0006412">
    <property type="term" value="P:translation"/>
    <property type="evidence" value="ECO:0007669"/>
    <property type="project" value="UniProtKB-UniRule"/>
</dbReference>
<dbReference type="FunFam" id="3.30.70.330:FF:000001">
    <property type="entry name" value="50S ribosomal protein L23"/>
    <property type="match status" value="1"/>
</dbReference>
<dbReference type="Gene3D" id="3.30.70.330">
    <property type="match status" value="1"/>
</dbReference>
<dbReference type="HAMAP" id="MF_01369_B">
    <property type="entry name" value="Ribosomal_uL23_B"/>
    <property type="match status" value="1"/>
</dbReference>
<dbReference type="InterPro" id="IPR012677">
    <property type="entry name" value="Nucleotide-bd_a/b_plait_sf"/>
</dbReference>
<dbReference type="InterPro" id="IPR013025">
    <property type="entry name" value="Ribosomal_uL23-like"/>
</dbReference>
<dbReference type="InterPro" id="IPR012678">
    <property type="entry name" value="Ribosomal_uL23/eL15/eS24_sf"/>
</dbReference>
<dbReference type="InterPro" id="IPR001014">
    <property type="entry name" value="Ribosomal_uL23_CS"/>
</dbReference>
<dbReference type="NCBIfam" id="NF004363">
    <property type="entry name" value="PRK05738.2-4"/>
    <property type="match status" value="1"/>
</dbReference>
<dbReference type="PANTHER" id="PTHR11620">
    <property type="entry name" value="60S RIBOSOMAL PROTEIN L23A"/>
    <property type="match status" value="1"/>
</dbReference>
<dbReference type="Pfam" id="PF00276">
    <property type="entry name" value="Ribosomal_L23"/>
    <property type="match status" value="1"/>
</dbReference>
<dbReference type="SUPFAM" id="SSF54189">
    <property type="entry name" value="Ribosomal proteins S24e, L23 and L15e"/>
    <property type="match status" value="1"/>
</dbReference>
<dbReference type="PROSITE" id="PS00050">
    <property type="entry name" value="RIBOSOMAL_L23"/>
    <property type="match status" value="1"/>
</dbReference>
<name>RL23_LACJO</name>
<sequence length="98" mass="11362">MDARDIILRPVVTEKSMNLMDDKKYTFDVLVSATKTQVRNAIEEIFDVKVKNVNIMNVRGKEKRVGRYTGKTARRRKAIVTLTEDSNDIKIFNDNKEN</sequence>
<proteinExistence type="inferred from homology"/>
<feature type="chain" id="PRO_1000068093" description="Large ribosomal subunit protein uL23">
    <location>
        <begin position="1"/>
        <end position="98"/>
    </location>
</feature>
<protein>
    <recommendedName>
        <fullName evidence="1">Large ribosomal subunit protein uL23</fullName>
    </recommendedName>
    <alternativeName>
        <fullName evidence="2">50S ribosomal protein L23</fullName>
    </alternativeName>
</protein>
<keyword id="KW-0687">Ribonucleoprotein</keyword>
<keyword id="KW-0689">Ribosomal protein</keyword>
<keyword id="KW-0694">RNA-binding</keyword>
<keyword id="KW-0699">rRNA-binding</keyword>